<proteinExistence type="predicted"/>
<sequence>MRFGMSTKLKPTKGENYRNGKLRVFFLVSLLLFLLSCSSPKEVKGKPEEFFLKNYEKGIYRYAILENKPQDTEYCKVHLKDLIKEGEYILSLPSRYKVEREKLSTKLYCELFSKGRFLEVAGERFTPPSALKVVTFVELKEGLFLWFLERVRAQGGGGGGIIFLPLPIPWGGGYNYEGRYRTPTGRYGK</sequence>
<keyword id="KW-1185">Reference proteome</keyword>
<dbReference type="EMBL" id="AE000657">
    <property type="protein sequence ID" value="AAC07334.1"/>
    <property type="molecule type" value="Genomic_DNA"/>
</dbReference>
<dbReference type="PIR" id="H70416">
    <property type="entry name" value="H70416"/>
</dbReference>
<dbReference type="RefSeq" id="NP_213927.1">
    <property type="nucleotide sequence ID" value="NC_000918.1"/>
</dbReference>
<dbReference type="STRING" id="224324.aq_1348"/>
<dbReference type="EnsemblBacteria" id="AAC07334">
    <property type="protein sequence ID" value="AAC07334"/>
    <property type="gene ID" value="aq_1348"/>
</dbReference>
<dbReference type="KEGG" id="aae:aq_1348"/>
<dbReference type="HOGENOM" id="CLU_1431860_0_0_0"/>
<dbReference type="InParanoid" id="O67363"/>
<dbReference type="Proteomes" id="UP000000798">
    <property type="component" value="Chromosome"/>
</dbReference>
<protein>
    <recommendedName>
        <fullName>Uncharacterized protein aq_1348</fullName>
    </recommendedName>
</protein>
<feature type="chain" id="PRO_0000186921" description="Uncharacterized protein aq_1348">
    <location>
        <begin position="1"/>
        <end position="189"/>
    </location>
</feature>
<gene>
    <name type="ordered locus">aq_1348</name>
</gene>
<name>Y1348_AQUAE</name>
<accession>O67363</accession>
<organism>
    <name type="scientific">Aquifex aeolicus (strain VF5)</name>
    <dbReference type="NCBI Taxonomy" id="224324"/>
    <lineage>
        <taxon>Bacteria</taxon>
        <taxon>Pseudomonadati</taxon>
        <taxon>Aquificota</taxon>
        <taxon>Aquificia</taxon>
        <taxon>Aquificales</taxon>
        <taxon>Aquificaceae</taxon>
        <taxon>Aquifex</taxon>
    </lineage>
</organism>
<reference key="1">
    <citation type="journal article" date="1998" name="Nature">
        <title>The complete genome of the hyperthermophilic bacterium Aquifex aeolicus.</title>
        <authorList>
            <person name="Deckert G."/>
            <person name="Warren P.V."/>
            <person name="Gaasterland T."/>
            <person name="Young W.G."/>
            <person name="Lenox A.L."/>
            <person name="Graham D.E."/>
            <person name="Overbeek R."/>
            <person name="Snead M.A."/>
            <person name="Keller M."/>
            <person name="Aujay M."/>
            <person name="Huber R."/>
            <person name="Feldman R.A."/>
            <person name="Short J.M."/>
            <person name="Olsen G.J."/>
            <person name="Swanson R.V."/>
        </authorList>
    </citation>
    <scope>NUCLEOTIDE SEQUENCE [LARGE SCALE GENOMIC DNA]</scope>
    <source>
        <strain>VF5</strain>
    </source>
</reference>